<sequence>MKTGIVTTLIALCLPVSVFATTLRLSTDVDLLVLDGKKVSSSLLRGADSIELDNGPHQLVFRVEKTIHLSNSEERLYISPPLVVSFNTQLINQVNFRLPRLENEREANHFDAAPHLELLDGDATPIPVKLDILAITSTAKTIDYEVEVERYNKSAKRASLPQFATMMADDSTLLSGVSELDAIPPQSQVLTEQRLKYWFKLADPQTRNTFLQWAEKQPSS</sequence>
<protein>
    <recommendedName>
        <fullName evidence="1">UPF0319 protein YccT</fullName>
    </recommendedName>
</protein>
<comment type="similarity">
    <text evidence="1">Belongs to the UPF0319 family.</text>
</comment>
<keyword id="KW-1185">Reference proteome</keyword>
<keyword id="KW-0732">Signal</keyword>
<proteinExistence type="inferred from homology"/>
<name>YCCT_ECO55</name>
<reference key="1">
    <citation type="journal article" date="2009" name="PLoS Genet.">
        <title>Organised genome dynamics in the Escherichia coli species results in highly diverse adaptive paths.</title>
        <authorList>
            <person name="Touchon M."/>
            <person name="Hoede C."/>
            <person name="Tenaillon O."/>
            <person name="Barbe V."/>
            <person name="Baeriswyl S."/>
            <person name="Bidet P."/>
            <person name="Bingen E."/>
            <person name="Bonacorsi S."/>
            <person name="Bouchier C."/>
            <person name="Bouvet O."/>
            <person name="Calteau A."/>
            <person name="Chiapello H."/>
            <person name="Clermont O."/>
            <person name="Cruveiller S."/>
            <person name="Danchin A."/>
            <person name="Diard M."/>
            <person name="Dossat C."/>
            <person name="Karoui M.E."/>
            <person name="Frapy E."/>
            <person name="Garry L."/>
            <person name="Ghigo J.M."/>
            <person name="Gilles A.M."/>
            <person name="Johnson J."/>
            <person name="Le Bouguenec C."/>
            <person name="Lescat M."/>
            <person name="Mangenot S."/>
            <person name="Martinez-Jehanne V."/>
            <person name="Matic I."/>
            <person name="Nassif X."/>
            <person name="Oztas S."/>
            <person name="Petit M.A."/>
            <person name="Pichon C."/>
            <person name="Rouy Z."/>
            <person name="Ruf C.S."/>
            <person name="Schneider D."/>
            <person name="Tourret J."/>
            <person name="Vacherie B."/>
            <person name="Vallenet D."/>
            <person name="Medigue C."/>
            <person name="Rocha E.P.C."/>
            <person name="Denamur E."/>
        </authorList>
    </citation>
    <scope>NUCLEOTIDE SEQUENCE [LARGE SCALE GENOMIC DNA]</scope>
    <source>
        <strain>55989 / EAEC</strain>
    </source>
</reference>
<evidence type="ECO:0000255" key="1">
    <source>
        <dbReference type="HAMAP-Rule" id="MF_00789"/>
    </source>
</evidence>
<feature type="signal peptide" evidence="1">
    <location>
        <begin position="1"/>
        <end position="20"/>
    </location>
</feature>
<feature type="chain" id="PRO_1000148487" description="UPF0319 protein YccT">
    <location>
        <begin position="21"/>
        <end position="220"/>
    </location>
</feature>
<accession>B7LE64</accession>
<dbReference type="EMBL" id="CU928145">
    <property type="protein sequence ID" value="CAU96875.1"/>
    <property type="molecule type" value="Genomic_DNA"/>
</dbReference>
<dbReference type="RefSeq" id="WP_000847785.1">
    <property type="nucleotide sequence ID" value="NC_011748.1"/>
</dbReference>
<dbReference type="KEGG" id="eck:EC55989_1013"/>
<dbReference type="HOGENOM" id="CLU_073782_2_0_6"/>
<dbReference type="Proteomes" id="UP000000746">
    <property type="component" value="Chromosome"/>
</dbReference>
<dbReference type="HAMAP" id="MF_00789">
    <property type="entry name" value="UPF0319"/>
    <property type="match status" value="1"/>
</dbReference>
<dbReference type="InterPro" id="IPR018635">
    <property type="entry name" value="UPF0319"/>
</dbReference>
<dbReference type="NCBIfam" id="NF047712">
    <property type="entry name" value="CrliSynInhib"/>
    <property type="match status" value="1"/>
</dbReference>
<dbReference type="NCBIfam" id="NF002967">
    <property type="entry name" value="PRK03641.1"/>
    <property type="match status" value="1"/>
</dbReference>
<dbReference type="PANTHER" id="PTHR38108">
    <property type="entry name" value="UPF0319 PROTEIN YCCT"/>
    <property type="match status" value="1"/>
</dbReference>
<dbReference type="PANTHER" id="PTHR38108:SF1">
    <property type="entry name" value="UPF0319 PROTEIN YCCT"/>
    <property type="match status" value="1"/>
</dbReference>
<dbReference type="Pfam" id="PF09829">
    <property type="entry name" value="DUF2057"/>
    <property type="match status" value="1"/>
</dbReference>
<gene>
    <name evidence="1" type="primary">yccT</name>
    <name type="ordered locus">EC55989_1013</name>
</gene>
<organism>
    <name type="scientific">Escherichia coli (strain 55989 / EAEC)</name>
    <dbReference type="NCBI Taxonomy" id="585055"/>
    <lineage>
        <taxon>Bacteria</taxon>
        <taxon>Pseudomonadati</taxon>
        <taxon>Pseudomonadota</taxon>
        <taxon>Gammaproteobacteria</taxon>
        <taxon>Enterobacterales</taxon>
        <taxon>Enterobacteriaceae</taxon>
        <taxon>Escherichia</taxon>
    </lineage>
</organism>